<accession>Q0T524</accession>
<dbReference type="EMBL" id="CP000266">
    <property type="protein sequence ID" value="ABF03591.1"/>
    <property type="molecule type" value="Genomic_DNA"/>
</dbReference>
<dbReference type="RefSeq" id="WP_000431389.1">
    <property type="nucleotide sequence ID" value="NC_008258.1"/>
</dbReference>
<dbReference type="SMR" id="Q0T524"/>
<dbReference type="KEGG" id="sfv:SFV_1398"/>
<dbReference type="HOGENOM" id="CLU_113254_0_0_6"/>
<dbReference type="Proteomes" id="UP000000659">
    <property type="component" value="Chromosome"/>
</dbReference>
<dbReference type="GO" id="GO:0005829">
    <property type="term" value="C:cytosol"/>
    <property type="evidence" value="ECO:0007669"/>
    <property type="project" value="TreeGrafter"/>
</dbReference>
<dbReference type="GO" id="GO:0033592">
    <property type="term" value="F:RNA strand annealing activity"/>
    <property type="evidence" value="ECO:0007669"/>
    <property type="project" value="UniProtKB-UniRule"/>
</dbReference>
<dbReference type="GO" id="GO:0034057">
    <property type="term" value="F:RNA strand-exchange activity"/>
    <property type="evidence" value="ECO:0007669"/>
    <property type="project" value="UniProtKB-UniRule"/>
</dbReference>
<dbReference type="GO" id="GO:0010608">
    <property type="term" value="P:post-transcriptional regulation of gene expression"/>
    <property type="evidence" value="ECO:0007669"/>
    <property type="project" value="InterPro"/>
</dbReference>
<dbReference type="FunFam" id="1.10.1710.10:FF:000001">
    <property type="entry name" value="RNA chaperone ProQ"/>
    <property type="match status" value="1"/>
</dbReference>
<dbReference type="Gene3D" id="1.10.1710.10">
    <property type="entry name" value="ProQ/FinO domain"/>
    <property type="match status" value="1"/>
</dbReference>
<dbReference type="HAMAP" id="MF_00749">
    <property type="entry name" value="ProQ"/>
    <property type="match status" value="1"/>
</dbReference>
<dbReference type="InterPro" id="IPR023529">
    <property type="entry name" value="ProQ"/>
</dbReference>
<dbReference type="InterPro" id="IPR016103">
    <property type="entry name" value="ProQ/FinO"/>
</dbReference>
<dbReference type="InterPro" id="IPR036442">
    <property type="entry name" value="ProQ/FinO_sf"/>
</dbReference>
<dbReference type="InterPro" id="IPR035236">
    <property type="entry name" value="ProQ_C"/>
</dbReference>
<dbReference type="NCBIfam" id="NF003434">
    <property type="entry name" value="PRK04950.1"/>
    <property type="match status" value="1"/>
</dbReference>
<dbReference type="PANTHER" id="PTHR38106">
    <property type="entry name" value="RNA CHAPERONE PROQ"/>
    <property type="match status" value="1"/>
</dbReference>
<dbReference type="PANTHER" id="PTHR38106:SF1">
    <property type="entry name" value="RNA CHAPERONE PROQ"/>
    <property type="match status" value="1"/>
</dbReference>
<dbReference type="Pfam" id="PF04352">
    <property type="entry name" value="ProQ"/>
    <property type="match status" value="1"/>
</dbReference>
<dbReference type="Pfam" id="PF17516">
    <property type="entry name" value="ProQ_C"/>
    <property type="match status" value="1"/>
</dbReference>
<dbReference type="SMART" id="SM00945">
    <property type="entry name" value="ProQ"/>
    <property type="match status" value="1"/>
</dbReference>
<dbReference type="SUPFAM" id="SSF48657">
    <property type="entry name" value="FinO-like"/>
    <property type="match status" value="1"/>
</dbReference>
<comment type="function">
    <text evidence="1">RNA chaperone with significant RNA binding, RNA strand exchange and RNA duplexing activities. May regulate ProP activity through an RNA-based, post-transcriptional mechanism.</text>
</comment>
<comment type="subcellular location">
    <subcellularLocation>
        <location evidence="1">Cytoplasm</location>
    </subcellularLocation>
</comment>
<comment type="similarity">
    <text evidence="1">Belongs to the ProQ family.</text>
</comment>
<proteinExistence type="inferred from homology"/>
<sequence length="232" mass="25835">MENQPKLNSSKEVIAFLAERFPHCFSAEGEARPLKIGIFQDLVDRVAGEMSLSKTQLRSALRLYTSSWRYLYGVKPGATRVDLDGNPCGELDEQHVEHARKQLEEAKARVQAQRAEQQAKKREAAAAAGEKEDAPRRERKPRPTTPRRKEGAERKPRAQKPVEKAPKTVKAPREEQHTPVSDISALTVGQALKVKAGQNAMDATVLEITKDGVRVQLNSGMSLIVRAEHLVF</sequence>
<reference key="1">
    <citation type="journal article" date="2006" name="BMC Genomics">
        <title>Complete genome sequence of Shigella flexneri 5b and comparison with Shigella flexneri 2a.</title>
        <authorList>
            <person name="Nie H."/>
            <person name="Yang F."/>
            <person name="Zhang X."/>
            <person name="Yang J."/>
            <person name="Chen L."/>
            <person name="Wang J."/>
            <person name="Xiong Z."/>
            <person name="Peng J."/>
            <person name="Sun L."/>
            <person name="Dong J."/>
            <person name="Xue Y."/>
            <person name="Xu X."/>
            <person name="Chen S."/>
            <person name="Yao Z."/>
            <person name="Shen Y."/>
            <person name="Jin Q."/>
        </authorList>
    </citation>
    <scope>NUCLEOTIDE SEQUENCE [LARGE SCALE GENOMIC DNA]</scope>
    <source>
        <strain>8401</strain>
    </source>
</reference>
<gene>
    <name evidence="1" type="primary">proQ</name>
    <name type="ordered locus">SFV_1398</name>
</gene>
<evidence type="ECO:0000255" key="1">
    <source>
        <dbReference type="HAMAP-Rule" id="MF_00749"/>
    </source>
</evidence>
<evidence type="ECO:0000256" key="2">
    <source>
        <dbReference type="SAM" id="MobiDB-lite"/>
    </source>
</evidence>
<feature type="chain" id="PRO_0000303100" description="RNA chaperone ProQ">
    <location>
        <begin position="1"/>
        <end position="232"/>
    </location>
</feature>
<feature type="region of interest" description="Disordered" evidence="2">
    <location>
        <begin position="105"/>
        <end position="182"/>
    </location>
</feature>
<feature type="compositionally biased region" description="Basic and acidic residues" evidence="2">
    <location>
        <begin position="117"/>
        <end position="136"/>
    </location>
</feature>
<feature type="compositionally biased region" description="Basic residues" evidence="2">
    <location>
        <begin position="137"/>
        <end position="146"/>
    </location>
</feature>
<feature type="compositionally biased region" description="Basic and acidic residues" evidence="2">
    <location>
        <begin position="147"/>
        <end position="177"/>
    </location>
</feature>
<keyword id="KW-0143">Chaperone</keyword>
<keyword id="KW-0963">Cytoplasm</keyword>
<keyword id="KW-0694">RNA-binding</keyword>
<organism>
    <name type="scientific">Shigella flexneri serotype 5b (strain 8401)</name>
    <dbReference type="NCBI Taxonomy" id="373384"/>
    <lineage>
        <taxon>Bacteria</taxon>
        <taxon>Pseudomonadati</taxon>
        <taxon>Pseudomonadota</taxon>
        <taxon>Gammaproteobacteria</taxon>
        <taxon>Enterobacterales</taxon>
        <taxon>Enterobacteriaceae</taxon>
        <taxon>Shigella</taxon>
    </lineage>
</organism>
<protein>
    <recommendedName>
        <fullName evidence="1">RNA chaperone ProQ</fullName>
    </recommendedName>
</protein>
<name>PROQ_SHIF8</name>